<dbReference type="EC" id="4.2.1.9" evidence="1"/>
<dbReference type="EMBL" id="CP000901">
    <property type="protein sequence ID" value="ABX85173.1"/>
    <property type="molecule type" value="Genomic_DNA"/>
</dbReference>
<dbReference type="RefSeq" id="WP_002212014.1">
    <property type="nucleotide sequence ID" value="NZ_CP009935.1"/>
</dbReference>
<dbReference type="SMR" id="A9R8F3"/>
<dbReference type="GeneID" id="57974808"/>
<dbReference type="KEGG" id="ypg:YpAngola_A0485"/>
<dbReference type="PATRIC" id="fig|349746.12.peg.1434"/>
<dbReference type="UniPathway" id="UPA00047">
    <property type="reaction ID" value="UER00057"/>
</dbReference>
<dbReference type="UniPathway" id="UPA00049">
    <property type="reaction ID" value="UER00061"/>
</dbReference>
<dbReference type="GO" id="GO:0005829">
    <property type="term" value="C:cytosol"/>
    <property type="evidence" value="ECO:0007669"/>
    <property type="project" value="TreeGrafter"/>
</dbReference>
<dbReference type="GO" id="GO:0051537">
    <property type="term" value="F:2 iron, 2 sulfur cluster binding"/>
    <property type="evidence" value="ECO:0007669"/>
    <property type="project" value="UniProtKB-UniRule"/>
</dbReference>
<dbReference type="GO" id="GO:0004160">
    <property type="term" value="F:dihydroxy-acid dehydratase activity"/>
    <property type="evidence" value="ECO:0007669"/>
    <property type="project" value="UniProtKB-UniRule"/>
</dbReference>
<dbReference type="GO" id="GO:0000287">
    <property type="term" value="F:magnesium ion binding"/>
    <property type="evidence" value="ECO:0007669"/>
    <property type="project" value="UniProtKB-UniRule"/>
</dbReference>
<dbReference type="GO" id="GO:0009097">
    <property type="term" value="P:isoleucine biosynthetic process"/>
    <property type="evidence" value="ECO:0007669"/>
    <property type="project" value="UniProtKB-UniRule"/>
</dbReference>
<dbReference type="GO" id="GO:0009099">
    <property type="term" value="P:L-valine biosynthetic process"/>
    <property type="evidence" value="ECO:0007669"/>
    <property type="project" value="UniProtKB-UniRule"/>
</dbReference>
<dbReference type="FunFam" id="3.50.30.80:FF:000001">
    <property type="entry name" value="Dihydroxy-acid dehydratase"/>
    <property type="match status" value="1"/>
</dbReference>
<dbReference type="Gene3D" id="3.50.30.80">
    <property type="entry name" value="IlvD/EDD C-terminal domain-like"/>
    <property type="match status" value="1"/>
</dbReference>
<dbReference type="HAMAP" id="MF_00012">
    <property type="entry name" value="IlvD"/>
    <property type="match status" value="1"/>
</dbReference>
<dbReference type="InterPro" id="IPR042096">
    <property type="entry name" value="Dihydro-acid_dehy_C"/>
</dbReference>
<dbReference type="InterPro" id="IPR004404">
    <property type="entry name" value="DihydroxyA_deHydtase"/>
</dbReference>
<dbReference type="InterPro" id="IPR020558">
    <property type="entry name" value="DiOHA_6PGluconate_deHydtase_CS"/>
</dbReference>
<dbReference type="InterPro" id="IPR056740">
    <property type="entry name" value="ILV_EDD_C"/>
</dbReference>
<dbReference type="InterPro" id="IPR000581">
    <property type="entry name" value="ILV_EDD_N"/>
</dbReference>
<dbReference type="InterPro" id="IPR037237">
    <property type="entry name" value="IlvD/EDD_N"/>
</dbReference>
<dbReference type="NCBIfam" id="TIGR00110">
    <property type="entry name" value="ilvD"/>
    <property type="match status" value="1"/>
</dbReference>
<dbReference type="NCBIfam" id="NF009103">
    <property type="entry name" value="PRK12448.1"/>
    <property type="match status" value="1"/>
</dbReference>
<dbReference type="PANTHER" id="PTHR43661">
    <property type="entry name" value="D-XYLONATE DEHYDRATASE"/>
    <property type="match status" value="1"/>
</dbReference>
<dbReference type="PANTHER" id="PTHR43661:SF3">
    <property type="entry name" value="D-XYLONATE DEHYDRATASE YAGF-RELATED"/>
    <property type="match status" value="1"/>
</dbReference>
<dbReference type="Pfam" id="PF24877">
    <property type="entry name" value="ILV_EDD_C"/>
    <property type="match status" value="1"/>
</dbReference>
<dbReference type="Pfam" id="PF00920">
    <property type="entry name" value="ILVD_EDD_N"/>
    <property type="match status" value="1"/>
</dbReference>
<dbReference type="SUPFAM" id="SSF143975">
    <property type="entry name" value="IlvD/EDD N-terminal domain-like"/>
    <property type="match status" value="1"/>
</dbReference>
<dbReference type="SUPFAM" id="SSF52016">
    <property type="entry name" value="LeuD/IlvD-like"/>
    <property type="match status" value="1"/>
</dbReference>
<dbReference type="PROSITE" id="PS00886">
    <property type="entry name" value="ILVD_EDD_1"/>
    <property type="match status" value="1"/>
</dbReference>
<dbReference type="PROSITE" id="PS00887">
    <property type="entry name" value="ILVD_EDD_2"/>
    <property type="match status" value="1"/>
</dbReference>
<keyword id="KW-0001">2Fe-2S</keyword>
<keyword id="KW-0028">Amino-acid biosynthesis</keyword>
<keyword id="KW-0100">Branched-chain amino acid biosynthesis</keyword>
<keyword id="KW-0408">Iron</keyword>
<keyword id="KW-0411">Iron-sulfur</keyword>
<keyword id="KW-0456">Lyase</keyword>
<keyword id="KW-0460">Magnesium</keyword>
<keyword id="KW-0479">Metal-binding</keyword>
<sequence length="616" mass="65499">MPKYRSHTTTHGRNMAGARALWRATGMTDDDFGKPIIAVVNSFTQFVPGHVHLRDLGKLVAEQIVASGGVAKEFNTIAVDDGIAMGHGGMLYSLPSRELIADSVEYMVNAHCADAMVCISNCDKITPGMLMASLRLNIPVIFVSGGPMEAGKTKLSDKIIKLDLIDAMIQGANPNVSDEESAQIERSACPTCGSCSGMFTANSMNCLNEALGLALPGNGSLLATHADRKQLFLDAGKHIVALTKRYYEQDDVSALPRNIANKAAFENAMILDIAMGGSTNTVLHLLAAAQEGEIDFSMTDIDHLSRKVPHLCKVAPSTQKYHMEDVHRAGGVIGILGELDRAGLLNRDVSNVLGLNLTQTLEAYDVMLTQDEGVKQMYAAGPAGIRTTKAFSQDCRYPSLDTDREEGCIRTREHAYSQDGGLAVLYGNIAADGCIVKTAGVDKDSLTFRGPAKVFESQDEAVEAILGGKVVAGDVVVIRYEGPKGGPGMQEMLYPTTYLKSMGLGKSCALLTDGRFSGGTSGLSIGHVSPEAASGGLIGLVQDGDFINIDIPNRGIVLDVSEAELAARRETEEAHGDAAWSPKGRERQVSYALRAYAMLATSADKGAVRDKSKLGG</sequence>
<accession>A9R8F3</accession>
<feature type="chain" id="PRO_1000089435" description="Dihydroxy-acid dehydratase">
    <location>
        <begin position="1"/>
        <end position="616"/>
    </location>
</feature>
<feature type="active site" description="Proton acceptor" evidence="1">
    <location>
        <position position="517"/>
    </location>
</feature>
<feature type="binding site" evidence="1">
    <location>
        <position position="81"/>
    </location>
    <ligand>
        <name>Mg(2+)</name>
        <dbReference type="ChEBI" id="CHEBI:18420"/>
    </ligand>
</feature>
<feature type="binding site" evidence="1">
    <location>
        <position position="122"/>
    </location>
    <ligand>
        <name>[2Fe-2S] cluster</name>
        <dbReference type="ChEBI" id="CHEBI:190135"/>
    </ligand>
</feature>
<feature type="binding site" evidence="1">
    <location>
        <position position="123"/>
    </location>
    <ligand>
        <name>Mg(2+)</name>
        <dbReference type="ChEBI" id="CHEBI:18420"/>
    </ligand>
</feature>
<feature type="binding site" description="via carbamate group" evidence="1">
    <location>
        <position position="124"/>
    </location>
    <ligand>
        <name>Mg(2+)</name>
        <dbReference type="ChEBI" id="CHEBI:18420"/>
    </ligand>
</feature>
<feature type="binding site" evidence="1">
    <location>
        <position position="195"/>
    </location>
    <ligand>
        <name>[2Fe-2S] cluster</name>
        <dbReference type="ChEBI" id="CHEBI:190135"/>
    </ligand>
</feature>
<feature type="binding site" evidence="1">
    <location>
        <position position="491"/>
    </location>
    <ligand>
        <name>Mg(2+)</name>
        <dbReference type="ChEBI" id="CHEBI:18420"/>
    </ligand>
</feature>
<feature type="modified residue" description="N6-carboxylysine" evidence="1">
    <location>
        <position position="124"/>
    </location>
</feature>
<protein>
    <recommendedName>
        <fullName evidence="1">Dihydroxy-acid dehydratase</fullName>
        <shortName evidence="1">DAD</shortName>
        <ecNumber evidence="1">4.2.1.9</ecNumber>
    </recommendedName>
</protein>
<name>ILVD_YERPG</name>
<evidence type="ECO:0000255" key="1">
    <source>
        <dbReference type="HAMAP-Rule" id="MF_00012"/>
    </source>
</evidence>
<comment type="function">
    <text evidence="1">Functions in the biosynthesis of branched-chain amino acids. Catalyzes the dehydration of (2R,3R)-2,3-dihydroxy-3-methylpentanoate (2,3-dihydroxy-3-methylvalerate) into 2-oxo-3-methylpentanoate (2-oxo-3-methylvalerate) and of (2R)-2,3-dihydroxy-3-methylbutanoate (2,3-dihydroxyisovalerate) into 2-oxo-3-methylbutanoate (2-oxoisovalerate), the penultimate precursor to L-isoleucine and L-valine, respectively.</text>
</comment>
<comment type="catalytic activity">
    <reaction evidence="1">
        <text>(2R)-2,3-dihydroxy-3-methylbutanoate = 3-methyl-2-oxobutanoate + H2O</text>
        <dbReference type="Rhea" id="RHEA:24809"/>
        <dbReference type="ChEBI" id="CHEBI:11851"/>
        <dbReference type="ChEBI" id="CHEBI:15377"/>
        <dbReference type="ChEBI" id="CHEBI:49072"/>
        <dbReference type="EC" id="4.2.1.9"/>
    </reaction>
    <physiologicalReaction direction="left-to-right" evidence="1">
        <dbReference type="Rhea" id="RHEA:24810"/>
    </physiologicalReaction>
</comment>
<comment type="catalytic activity">
    <reaction evidence="1">
        <text>(2R,3R)-2,3-dihydroxy-3-methylpentanoate = (S)-3-methyl-2-oxopentanoate + H2O</text>
        <dbReference type="Rhea" id="RHEA:27694"/>
        <dbReference type="ChEBI" id="CHEBI:15377"/>
        <dbReference type="ChEBI" id="CHEBI:35146"/>
        <dbReference type="ChEBI" id="CHEBI:49258"/>
        <dbReference type="EC" id="4.2.1.9"/>
    </reaction>
    <physiologicalReaction direction="left-to-right" evidence="1">
        <dbReference type="Rhea" id="RHEA:27695"/>
    </physiologicalReaction>
</comment>
<comment type="cofactor">
    <cofactor evidence="1">
        <name>[2Fe-2S] cluster</name>
        <dbReference type="ChEBI" id="CHEBI:190135"/>
    </cofactor>
    <text evidence="1">Binds 1 [2Fe-2S] cluster per subunit. This cluster acts as a Lewis acid cofactor.</text>
</comment>
<comment type="cofactor">
    <cofactor evidence="1">
        <name>Mg(2+)</name>
        <dbReference type="ChEBI" id="CHEBI:18420"/>
    </cofactor>
</comment>
<comment type="pathway">
    <text evidence="1">Amino-acid biosynthesis; L-isoleucine biosynthesis; L-isoleucine from 2-oxobutanoate: step 3/4.</text>
</comment>
<comment type="pathway">
    <text evidence="1">Amino-acid biosynthesis; L-valine biosynthesis; L-valine from pyruvate: step 3/4.</text>
</comment>
<comment type="subunit">
    <text evidence="1">Homodimer.</text>
</comment>
<comment type="similarity">
    <text evidence="1">Belongs to the IlvD/Edd family.</text>
</comment>
<organism>
    <name type="scientific">Yersinia pestis bv. Antiqua (strain Angola)</name>
    <dbReference type="NCBI Taxonomy" id="349746"/>
    <lineage>
        <taxon>Bacteria</taxon>
        <taxon>Pseudomonadati</taxon>
        <taxon>Pseudomonadota</taxon>
        <taxon>Gammaproteobacteria</taxon>
        <taxon>Enterobacterales</taxon>
        <taxon>Yersiniaceae</taxon>
        <taxon>Yersinia</taxon>
    </lineage>
</organism>
<gene>
    <name evidence="1" type="primary">ilvD</name>
    <name type="ordered locus">YpAngola_A0485</name>
</gene>
<reference key="1">
    <citation type="journal article" date="2010" name="J. Bacteriol.">
        <title>Genome sequence of the deep-rooted Yersinia pestis strain Angola reveals new insights into the evolution and pangenome of the plague bacterium.</title>
        <authorList>
            <person name="Eppinger M."/>
            <person name="Worsham P.L."/>
            <person name="Nikolich M.P."/>
            <person name="Riley D.R."/>
            <person name="Sebastian Y."/>
            <person name="Mou S."/>
            <person name="Achtman M."/>
            <person name="Lindler L.E."/>
            <person name="Ravel J."/>
        </authorList>
    </citation>
    <scope>NUCLEOTIDE SEQUENCE [LARGE SCALE GENOMIC DNA]</scope>
    <source>
        <strain>Angola</strain>
    </source>
</reference>
<proteinExistence type="inferred from homology"/>